<gene>
    <name evidence="1" type="primary">xerC</name>
    <name type="ordered locus">Cpar_0553</name>
</gene>
<accession>B3QM22</accession>
<sequence length="336" mass="38631">MTINRSRQPEDHEVARCRWLEPFLSHLQAARNVSPKTVTAYRCDLLQYFSFLKEQAGLDRLEAVEPERVEVADVRLFMGHLLDKGIQPRSIARKLASVKSFYRFLLETGRISSSPLSLVVTPRLDKKVPRFVSEEEARQLFRRFESQEDNAALQGDGKKAEVRQFETFRDRAVLEVLYGCGLRLSELIALERADVDLVHGFLKVTGKGRKQRIVPLGEPAVEALRKYFEVRRNFFRIPLERTGESSRVFVTSRGRQLYPMLVQRMTKRYLTPVSESEKKNPHILRHSFATHMLNGGADLKSVSEMLGHSSLTTTELYTHVTFSRLKEIYDKAHPGA</sequence>
<evidence type="ECO:0000255" key="1">
    <source>
        <dbReference type="HAMAP-Rule" id="MF_01808"/>
    </source>
</evidence>
<evidence type="ECO:0000255" key="2">
    <source>
        <dbReference type="PROSITE-ProRule" id="PRU01246"/>
    </source>
</evidence>
<evidence type="ECO:0000255" key="3">
    <source>
        <dbReference type="PROSITE-ProRule" id="PRU01248"/>
    </source>
</evidence>
<name>XERC_CHLP8</name>
<proteinExistence type="inferred from homology"/>
<organism>
    <name type="scientific">Chlorobaculum parvum (strain DSM 263 / NCIMB 8327)</name>
    <name type="common">Chlorobium vibrioforme subsp. thiosulfatophilum</name>
    <dbReference type="NCBI Taxonomy" id="517417"/>
    <lineage>
        <taxon>Bacteria</taxon>
        <taxon>Pseudomonadati</taxon>
        <taxon>Chlorobiota</taxon>
        <taxon>Chlorobiia</taxon>
        <taxon>Chlorobiales</taxon>
        <taxon>Chlorobiaceae</taxon>
        <taxon>Chlorobaculum</taxon>
    </lineage>
</organism>
<keyword id="KW-0131">Cell cycle</keyword>
<keyword id="KW-0132">Cell division</keyword>
<keyword id="KW-0159">Chromosome partition</keyword>
<keyword id="KW-0963">Cytoplasm</keyword>
<keyword id="KW-0229">DNA integration</keyword>
<keyword id="KW-0233">DNA recombination</keyword>
<keyword id="KW-0238">DNA-binding</keyword>
<reference key="1">
    <citation type="submission" date="2008-06" db="EMBL/GenBank/DDBJ databases">
        <title>Complete sequence of Chlorobaculum parvum NCIB 8327.</title>
        <authorList>
            <consortium name="US DOE Joint Genome Institute"/>
            <person name="Lucas S."/>
            <person name="Copeland A."/>
            <person name="Lapidus A."/>
            <person name="Glavina del Rio T."/>
            <person name="Dalin E."/>
            <person name="Tice H."/>
            <person name="Bruce D."/>
            <person name="Goodwin L."/>
            <person name="Pitluck S."/>
            <person name="Schmutz J."/>
            <person name="Larimer F."/>
            <person name="Land M."/>
            <person name="Hauser L."/>
            <person name="Kyrpides N."/>
            <person name="Mikhailova N."/>
            <person name="Zhao F."/>
            <person name="Li T."/>
            <person name="Liu Z."/>
            <person name="Overmann J."/>
            <person name="Bryant D.A."/>
            <person name="Richardson P."/>
        </authorList>
    </citation>
    <scope>NUCLEOTIDE SEQUENCE [LARGE SCALE GENOMIC DNA]</scope>
    <source>
        <strain>DSM 263 / NCIMB 8327</strain>
    </source>
</reference>
<comment type="function">
    <text evidence="1">Site-specific tyrosine recombinase, which acts by catalyzing the cutting and rejoining of the recombining DNA molecules. The XerC-XerD complex is essential to convert dimers of the bacterial chromosome into monomers to permit their segregation at cell division. It also contributes to the segregational stability of plasmids.</text>
</comment>
<comment type="subunit">
    <text evidence="1">Forms a cyclic heterotetrameric complex composed of two molecules of XerC and two molecules of XerD.</text>
</comment>
<comment type="subcellular location">
    <subcellularLocation>
        <location evidence="1">Cytoplasm</location>
    </subcellularLocation>
</comment>
<comment type="similarity">
    <text evidence="1">Belongs to the 'phage' integrase family. XerC subfamily.</text>
</comment>
<protein>
    <recommendedName>
        <fullName evidence="1">Tyrosine recombinase XerC</fullName>
    </recommendedName>
</protein>
<dbReference type="EMBL" id="CP001099">
    <property type="protein sequence ID" value="ACF10975.1"/>
    <property type="molecule type" value="Genomic_DNA"/>
</dbReference>
<dbReference type="RefSeq" id="WP_012501808.1">
    <property type="nucleotide sequence ID" value="NC_011027.1"/>
</dbReference>
<dbReference type="SMR" id="B3QM22"/>
<dbReference type="STRING" id="517417.Cpar_0553"/>
<dbReference type="KEGG" id="cpc:Cpar_0553"/>
<dbReference type="eggNOG" id="COG4974">
    <property type="taxonomic scope" value="Bacteria"/>
</dbReference>
<dbReference type="HOGENOM" id="CLU_027562_9_0_10"/>
<dbReference type="OrthoDB" id="9801717at2"/>
<dbReference type="Proteomes" id="UP000008811">
    <property type="component" value="Chromosome"/>
</dbReference>
<dbReference type="GO" id="GO:0005737">
    <property type="term" value="C:cytoplasm"/>
    <property type="evidence" value="ECO:0007669"/>
    <property type="project" value="UniProtKB-SubCell"/>
</dbReference>
<dbReference type="GO" id="GO:0003677">
    <property type="term" value="F:DNA binding"/>
    <property type="evidence" value="ECO:0007669"/>
    <property type="project" value="UniProtKB-KW"/>
</dbReference>
<dbReference type="GO" id="GO:0009037">
    <property type="term" value="F:tyrosine-based site-specific recombinase activity"/>
    <property type="evidence" value="ECO:0007669"/>
    <property type="project" value="UniProtKB-UniRule"/>
</dbReference>
<dbReference type="GO" id="GO:0051301">
    <property type="term" value="P:cell division"/>
    <property type="evidence" value="ECO:0007669"/>
    <property type="project" value="UniProtKB-KW"/>
</dbReference>
<dbReference type="GO" id="GO:0007059">
    <property type="term" value="P:chromosome segregation"/>
    <property type="evidence" value="ECO:0007669"/>
    <property type="project" value="UniProtKB-UniRule"/>
</dbReference>
<dbReference type="GO" id="GO:0006313">
    <property type="term" value="P:DNA transposition"/>
    <property type="evidence" value="ECO:0007669"/>
    <property type="project" value="UniProtKB-UniRule"/>
</dbReference>
<dbReference type="CDD" id="cd00798">
    <property type="entry name" value="INT_XerDC_C"/>
    <property type="match status" value="1"/>
</dbReference>
<dbReference type="Gene3D" id="1.10.150.130">
    <property type="match status" value="1"/>
</dbReference>
<dbReference type="Gene3D" id="1.10.443.10">
    <property type="entry name" value="Intergrase catalytic core"/>
    <property type="match status" value="1"/>
</dbReference>
<dbReference type="HAMAP" id="MF_01808">
    <property type="entry name" value="Recomb_XerC_XerD"/>
    <property type="match status" value="1"/>
</dbReference>
<dbReference type="InterPro" id="IPR044068">
    <property type="entry name" value="CB"/>
</dbReference>
<dbReference type="InterPro" id="IPR011010">
    <property type="entry name" value="DNA_brk_join_enz"/>
</dbReference>
<dbReference type="InterPro" id="IPR013762">
    <property type="entry name" value="Integrase-like_cat_sf"/>
</dbReference>
<dbReference type="InterPro" id="IPR002104">
    <property type="entry name" value="Integrase_catalytic"/>
</dbReference>
<dbReference type="InterPro" id="IPR010998">
    <property type="entry name" value="Integrase_recombinase_N"/>
</dbReference>
<dbReference type="InterPro" id="IPR004107">
    <property type="entry name" value="Integrase_SAM-like_N"/>
</dbReference>
<dbReference type="InterPro" id="IPR023009">
    <property type="entry name" value="Tyrosine_recombinase_XerC/XerD"/>
</dbReference>
<dbReference type="InterPro" id="IPR050090">
    <property type="entry name" value="Tyrosine_recombinase_XerCD"/>
</dbReference>
<dbReference type="PANTHER" id="PTHR30349">
    <property type="entry name" value="PHAGE INTEGRASE-RELATED"/>
    <property type="match status" value="1"/>
</dbReference>
<dbReference type="PANTHER" id="PTHR30349:SF77">
    <property type="entry name" value="TYROSINE RECOMBINASE XERC"/>
    <property type="match status" value="1"/>
</dbReference>
<dbReference type="Pfam" id="PF02899">
    <property type="entry name" value="Phage_int_SAM_1"/>
    <property type="match status" value="1"/>
</dbReference>
<dbReference type="Pfam" id="PF00589">
    <property type="entry name" value="Phage_integrase"/>
    <property type="match status" value="1"/>
</dbReference>
<dbReference type="SUPFAM" id="SSF56349">
    <property type="entry name" value="DNA breaking-rejoining enzymes"/>
    <property type="match status" value="1"/>
</dbReference>
<dbReference type="PROSITE" id="PS51900">
    <property type="entry name" value="CB"/>
    <property type="match status" value="1"/>
</dbReference>
<dbReference type="PROSITE" id="PS51898">
    <property type="entry name" value="TYR_RECOMBINASE"/>
    <property type="match status" value="1"/>
</dbReference>
<feature type="chain" id="PRO_1000187584" description="Tyrosine recombinase XerC">
    <location>
        <begin position="1"/>
        <end position="336"/>
    </location>
</feature>
<feature type="domain" description="Core-binding (CB)" evidence="3">
    <location>
        <begin position="14"/>
        <end position="106"/>
    </location>
</feature>
<feature type="domain" description="Tyr recombinase" evidence="2">
    <location>
        <begin position="127"/>
        <end position="330"/>
    </location>
</feature>
<feature type="active site" evidence="1">
    <location>
        <position position="183"/>
    </location>
</feature>
<feature type="active site" evidence="1">
    <location>
        <position position="207"/>
    </location>
</feature>
<feature type="active site" evidence="1">
    <location>
        <position position="282"/>
    </location>
</feature>
<feature type="active site" evidence="1">
    <location>
        <position position="285"/>
    </location>
</feature>
<feature type="active site" evidence="1">
    <location>
        <position position="308"/>
    </location>
</feature>
<feature type="active site" description="O-(3'-phospho-DNA)-tyrosine intermediate" evidence="1">
    <location>
        <position position="317"/>
    </location>
</feature>